<name>LEXA_LACPL</name>
<sequence>MSKTSESKQMAVLRFIYERVNEKGYPPTVREIGEAVDLSSTSTVHGHISRLEKKGYIQKDPTKPRAIEVTPAGFEALGVETTPHQIPVLGTVTAGQPILAVQEATDYFPIPKELESFGGDLFMLTIRGESMINIGIMNGDQVIVRRQSSADNGDIIIAMTDENEATCKRFFKEADHYRLQPENDTMAPIILNNVSVLGKVVGLYRDMLFQ</sequence>
<comment type="function">
    <text evidence="1">Represses a number of genes involved in the response to DNA damage (SOS response), including recA and lexA. In the presence of single-stranded DNA, RecA interacts with LexA causing an autocatalytic cleavage which disrupts the DNA-binding part of LexA, leading to derepression of the SOS regulon and eventually DNA repair.</text>
</comment>
<comment type="catalytic activity">
    <reaction evidence="1">
        <text>Hydrolysis of Ala-|-Gly bond in repressor LexA.</text>
        <dbReference type="EC" id="3.4.21.88"/>
    </reaction>
</comment>
<comment type="subunit">
    <text evidence="1">Homodimer.</text>
</comment>
<comment type="similarity">
    <text evidence="1">Belongs to the peptidase S24 family.</text>
</comment>
<accession>Q88VI6</accession>
<accession>F9UQ18</accession>
<evidence type="ECO:0000255" key="1">
    <source>
        <dbReference type="HAMAP-Rule" id="MF_00015"/>
    </source>
</evidence>
<organism>
    <name type="scientific">Lactiplantibacillus plantarum (strain ATCC BAA-793 / NCIMB 8826 / WCFS1)</name>
    <name type="common">Lactobacillus plantarum</name>
    <dbReference type="NCBI Taxonomy" id="220668"/>
    <lineage>
        <taxon>Bacteria</taxon>
        <taxon>Bacillati</taxon>
        <taxon>Bacillota</taxon>
        <taxon>Bacilli</taxon>
        <taxon>Lactobacillales</taxon>
        <taxon>Lactobacillaceae</taxon>
        <taxon>Lactiplantibacillus</taxon>
    </lineage>
</organism>
<gene>
    <name evidence="1" type="primary">lexA</name>
    <name type="ordered locus">lp_2063</name>
</gene>
<feature type="chain" id="PRO_0000170047" description="LexA repressor">
    <location>
        <begin position="1"/>
        <end position="210"/>
    </location>
</feature>
<feature type="DNA-binding region" description="H-T-H motif" evidence="1">
    <location>
        <begin position="29"/>
        <end position="49"/>
    </location>
</feature>
<feature type="active site" description="For autocatalytic cleavage activity" evidence="1">
    <location>
        <position position="130"/>
    </location>
</feature>
<feature type="active site" description="For autocatalytic cleavage activity" evidence="1">
    <location>
        <position position="168"/>
    </location>
</feature>
<feature type="site" description="Cleavage; by autolysis" evidence="1">
    <location>
        <begin position="94"/>
        <end position="95"/>
    </location>
</feature>
<proteinExistence type="inferred from homology"/>
<reference key="1">
    <citation type="journal article" date="2003" name="Proc. Natl. Acad. Sci. U.S.A.">
        <title>Complete genome sequence of Lactobacillus plantarum WCFS1.</title>
        <authorList>
            <person name="Kleerebezem M."/>
            <person name="Boekhorst J."/>
            <person name="van Kranenburg R."/>
            <person name="Molenaar D."/>
            <person name="Kuipers O.P."/>
            <person name="Leer R."/>
            <person name="Tarchini R."/>
            <person name="Peters S.A."/>
            <person name="Sandbrink H.M."/>
            <person name="Fiers M.W.E.J."/>
            <person name="Stiekema W."/>
            <person name="Klein Lankhorst R.M."/>
            <person name="Bron P.A."/>
            <person name="Hoffer S.M."/>
            <person name="Nierop Groot M.N."/>
            <person name="Kerkhoven R."/>
            <person name="De Vries M."/>
            <person name="Ursing B."/>
            <person name="De Vos W.M."/>
            <person name="Siezen R.J."/>
        </authorList>
    </citation>
    <scope>NUCLEOTIDE SEQUENCE [LARGE SCALE GENOMIC DNA]</scope>
    <source>
        <strain>ATCC BAA-793 / NCIMB 8826 / WCFS1</strain>
    </source>
</reference>
<reference key="2">
    <citation type="journal article" date="2012" name="J. Bacteriol.">
        <title>Complete resequencing and reannotation of the Lactobacillus plantarum WCFS1 genome.</title>
        <authorList>
            <person name="Siezen R.J."/>
            <person name="Francke C."/>
            <person name="Renckens B."/>
            <person name="Boekhorst J."/>
            <person name="Wels M."/>
            <person name="Kleerebezem M."/>
            <person name="van Hijum S.A."/>
        </authorList>
    </citation>
    <scope>NUCLEOTIDE SEQUENCE [LARGE SCALE GENOMIC DNA]</scope>
    <scope>GENOME REANNOTATION</scope>
    <source>
        <strain>ATCC BAA-793 / NCIMB 8826 / WCFS1</strain>
    </source>
</reference>
<keyword id="KW-0068">Autocatalytic cleavage</keyword>
<keyword id="KW-0227">DNA damage</keyword>
<keyword id="KW-0234">DNA repair</keyword>
<keyword id="KW-0235">DNA replication</keyword>
<keyword id="KW-0238">DNA-binding</keyword>
<keyword id="KW-0378">Hydrolase</keyword>
<keyword id="KW-1185">Reference proteome</keyword>
<keyword id="KW-0678">Repressor</keyword>
<keyword id="KW-0742">SOS response</keyword>
<keyword id="KW-0804">Transcription</keyword>
<keyword id="KW-0805">Transcription regulation</keyword>
<protein>
    <recommendedName>
        <fullName evidence="1">LexA repressor</fullName>
        <ecNumber evidence="1">3.4.21.88</ecNumber>
    </recommendedName>
</protein>
<dbReference type="EC" id="3.4.21.88" evidence="1"/>
<dbReference type="EMBL" id="AL935263">
    <property type="protein sequence ID" value="CCC79307.1"/>
    <property type="molecule type" value="Genomic_DNA"/>
</dbReference>
<dbReference type="RefSeq" id="WP_003640747.1">
    <property type="nucleotide sequence ID" value="NC_004567.2"/>
</dbReference>
<dbReference type="RefSeq" id="YP_004889821.1">
    <property type="nucleotide sequence ID" value="NC_004567.2"/>
</dbReference>
<dbReference type="SMR" id="Q88VI6"/>
<dbReference type="STRING" id="220668.lp_2063"/>
<dbReference type="MEROPS" id="S24.001"/>
<dbReference type="EnsemblBacteria" id="CCC79307">
    <property type="protein sequence ID" value="CCC79307"/>
    <property type="gene ID" value="lp_2063"/>
</dbReference>
<dbReference type="GeneID" id="77218383"/>
<dbReference type="KEGG" id="lpl:lp_2063"/>
<dbReference type="PATRIC" id="fig|220668.9.peg.1748"/>
<dbReference type="eggNOG" id="COG1974">
    <property type="taxonomic scope" value="Bacteria"/>
</dbReference>
<dbReference type="HOGENOM" id="CLU_066192_45_1_9"/>
<dbReference type="OrthoDB" id="9802364at2"/>
<dbReference type="PhylomeDB" id="Q88VI6"/>
<dbReference type="Proteomes" id="UP000000432">
    <property type="component" value="Chromosome"/>
</dbReference>
<dbReference type="GO" id="GO:0003677">
    <property type="term" value="F:DNA binding"/>
    <property type="evidence" value="ECO:0007669"/>
    <property type="project" value="UniProtKB-UniRule"/>
</dbReference>
<dbReference type="GO" id="GO:0004252">
    <property type="term" value="F:serine-type endopeptidase activity"/>
    <property type="evidence" value="ECO:0007669"/>
    <property type="project" value="UniProtKB-UniRule"/>
</dbReference>
<dbReference type="GO" id="GO:0006281">
    <property type="term" value="P:DNA repair"/>
    <property type="evidence" value="ECO:0007669"/>
    <property type="project" value="UniProtKB-UniRule"/>
</dbReference>
<dbReference type="GO" id="GO:0006260">
    <property type="term" value="P:DNA replication"/>
    <property type="evidence" value="ECO:0007669"/>
    <property type="project" value="UniProtKB-UniRule"/>
</dbReference>
<dbReference type="GO" id="GO:0045892">
    <property type="term" value="P:negative regulation of DNA-templated transcription"/>
    <property type="evidence" value="ECO:0007669"/>
    <property type="project" value="UniProtKB-UniRule"/>
</dbReference>
<dbReference type="GO" id="GO:0006508">
    <property type="term" value="P:proteolysis"/>
    <property type="evidence" value="ECO:0007669"/>
    <property type="project" value="InterPro"/>
</dbReference>
<dbReference type="GO" id="GO:0009432">
    <property type="term" value="P:SOS response"/>
    <property type="evidence" value="ECO:0007669"/>
    <property type="project" value="UniProtKB-UniRule"/>
</dbReference>
<dbReference type="CDD" id="cd00090">
    <property type="entry name" value="HTH_ARSR"/>
    <property type="match status" value="1"/>
</dbReference>
<dbReference type="CDD" id="cd06529">
    <property type="entry name" value="S24_LexA-like"/>
    <property type="match status" value="1"/>
</dbReference>
<dbReference type="FunFam" id="1.10.10.10:FF:000009">
    <property type="entry name" value="LexA repressor"/>
    <property type="match status" value="1"/>
</dbReference>
<dbReference type="FunFam" id="2.10.109.10:FF:000001">
    <property type="entry name" value="LexA repressor"/>
    <property type="match status" value="1"/>
</dbReference>
<dbReference type="Gene3D" id="2.10.109.10">
    <property type="entry name" value="Umud Fragment, subunit A"/>
    <property type="match status" value="1"/>
</dbReference>
<dbReference type="Gene3D" id="1.10.10.10">
    <property type="entry name" value="Winged helix-like DNA-binding domain superfamily/Winged helix DNA-binding domain"/>
    <property type="match status" value="1"/>
</dbReference>
<dbReference type="HAMAP" id="MF_00015">
    <property type="entry name" value="LexA"/>
    <property type="match status" value="1"/>
</dbReference>
<dbReference type="InterPro" id="IPR011991">
    <property type="entry name" value="ArsR-like_HTH"/>
</dbReference>
<dbReference type="InterPro" id="IPR006200">
    <property type="entry name" value="LexA"/>
</dbReference>
<dbReference type="InterPro" id="IPR039418">
    <property type="entry name" value="LexA-like"/>
</dbReference>
<dbReference type="InterPro" id="IPR036286">
    <property type="entry name" value="LexA/Signal_pep-like_sf"/>
</dbReference>
<dbReference type="InterPro" id="IPR006199">
    <property type="entry name" value="LexA_DNA-bd_dom"/>
</dbReference>
<dbReference type="InterPro" id="IPR050077">
    <property type="entry name" value="LexA_repressor"/>
</dbReference>
<dbReference type="InterPro" id="IPR006197">
    <property type="entry name" value="Peptidase_S24_LexA"/>
</dbReference>
<dbReference type="InterPro" id="IPR015927">
    <property type="entry name" value="Peptidase_S24_S26A/B/C"/>
</dbReference>
<dbReference type="InterPro" id="IPR036388">
    <property type="entry name" value="WH-like_DNA-bd_sf"/>
</dbReference>
<dbReference type="InterPro" id="IPR036390">
    <property type="entry name" value="WH_DNA-bd_sf"/>
</dbReference>
<dbReference type="NCBIfam" id="TIGR00498">
    <property type="entry name" value="lexA"/>
    <property type="match status" value="1"/>
</dbReference>
<dbReference type="PANTHER" id="PTHR33516">
    <property type="entry name" value="LEXA REPRESSOR"/>
    <property type="match status" value="1"/>
</dbReference>
<dbReference type="PANTHER" id="PTHR33516:SF2">
    <property type="entry name" value="LEXA REPRESSOR-RELATED"/>
    <property type="match status" value="1"/>
</dbReference>
<dbReference type="Pfam" id="PF01726">
    <property type="entry name" value="LexA_DNA_bind"/>
    <property type="match status" value="1"/>
</dbReference>
<dbReference type="Pfam" id="PF00717">
    <property type="entry name" value="Peptidase_S24"/>
    <property type="match status" value="1"/>
</dbReference>
<dbReference type="PRINTS" id="PR00726">
    <property type="entry name" value="LEXASERPTASE"/>
</dbReference>
<dbReference type="SUPFAM" id="SSF51306">
    <property type="entry name" value="LexA/Signal peptidase"/>
    <property type="match status" value="1"/>
</dbReference>
<dbReference type="SUPFAM" id="SSF46785">
    <property type="entry name" value="Winged helix' DNA-binding domain"/>
    <property type="match status" value="1"/>
</dbReference>